<feature type="chain" id="PRO_0000219300" description="Transmembrane 4 L6 family member 4">
    <location>
        <begin position="1"/>
        <end position="202"/>
    </location>
</feature>
<feature type="topological domain" description="Cytoplasmic" evidence="2">
    <location>
        <begin position="1"/>
        <end position="9"/>
    </location>
</feature>
<feature type="transmembrane region" description="Helical" evidence="2">
    <location>
        <begin position="10"/>
        <end position="30"/>
    </location>
</feature>
<feature type="topological domain" description="Extracellular" evidence="2">
    <location>
        <begin position="31"/>
        <end position="48"/>
    </location>
</feature>
<feature type="transmembrane region" description="Helical" evidence="2">
    <location>
        <begin position="49"/>
        <end position="69"/>
    </location>
</feature>
<feature type="topological domain" description="Cytoplasmic" evidence="2">
    <location>
        <begin position="70"/>
        <end position="93"/>
    </location>
</feature>
<feature type="transmembrane region" description="Helical" evidence="2">
    <location>
        <begin position="94"/>
        <end position="114"/>
    </location>
</feature>
<feature type="topological domain" description="Extracellular" evidence="2">
    <location>
        <begin position="115"/>
        <end position="158"/>
    </location>
</feature>
<feature type="transmembrane region" description="Helical" evidence="2">
    <location>
        <begin position="159"/>
        <end position="179"/>
    </location>
</feature>
<feature type="topological domain" description="Cytoplasmic" evidence="2">
    <location>
        <begin position="180"/>
        <end position="202"/>
    </location>
</feature>
<feature type="glycosylation site" description="N-linked (GlcNAc...) asparagine" evidence="2">
    <location>
        <position position="156"/>
    </location>
</feature>
<keyword id="KW-0325">Glycoprotein</keyword>
<keyword id="KW-0472">Membrane</keyword>
<keyword id="KW-1185">Reference proteome</keyword>
<keyword id="KW-0812">Transmembrane</keyword>
<keyword id="KW-1133">Transmembrane helix</keyword>
<name>T4S4_MOUSE</name>
<comment type="function">
    <text evidence="1">Regulates the adhesive and proliferative status of intestinal epithelial cells. Can mediate density-dependent cell proliferation (By similarity).</text>
</comment>
<comment type="subcellular location">
    <subcellularLocation>
        <location evidence="1">Membrane</location>
        <topology evidence="1">Multi-pass membrane protein</topology>
    </subcellularLocation>
</comment>
<comment type="similarity">
    <text evidence="3">Belongs to the L6 tetraspanin family.</text>
</comment>
<dbReference type="EMBL" id="BC010814">
    <property type="protein sequence ID" value="AAH10814.1"/>
    <property type="molecule type" value="mRNA"/>
</dbReference>
<dbReference type="CCDS" id="CCDS17361.1"/>
<dbReference type="FunCoup" id="Q91XD3">
    <property type="interactions" value="16"/>
</dbReference>
<dbReference type="STRING" id="10090.ENSMUSP00000029377"/>
<dbReference type="GlyCosmos" id="Q91XD3">
    <property type="glycosylation" value="1 site, No reported glycans"/>
</dbReference>
<dbReference type="GlyGen" id="Q91XD3">
    <property type="glycosylation" value="1 site"/>
</dbReference>
<dbReference type="PhosphoSitePlus" id="Q91XD3"/>
<dbReference type="SwissPalm" id="Q91XD3"/>
<dbReference type="PaxDb" id="10090-ENSMUSP00000029377"/>
<dbReference type="ProteomicsDB" id="262995"/>
<dbReference type="AGR" id="MGI:2385173"/>
<dbReference type="MGI" id="MGI:2385173">
    <property type="gene designation" value="Tm4sf4"/>
</dbReference>
<dbReference type="eggNOG" id="ENOG502QVGK">
    <property type="taxonomic scope" value="Eukaryota"/>
</dbReference>
<dbReference type="InParanoid" id="Q91XD3"/>
<dbReference type="PhylomeDB" id="Q91XD3"/>
<dbReference type="PRO" id="PR:Q91XD3"/>
<dbReference type="Proteomes" id="UP000000589">
    <property type="component" value="Unplaced"/>
</dbReference>
<dbReference type="RNAct" id="Q91XD3">
    <property type="molecule type" value="protein"/>
</dbReference>
<dbReference type="GO" id="GO:0016020">
    <property type="term" value="C:membrane"/>
    <property type="evidence" value="ECO:0007669"/>
    <property type="project" value="UniProtKB-SubCell"/>
</dbReference>
<dbReference type="InterPro" id="IPR008661">
    <property type="entry name" value="L6_membrane"/>
</dbReference>
<dbReference type="PANTHER" id="PTHR14198">
    <property type="entry name" value="TRANSMEMBRANE 4 L6 FAMILY MEMBER 1-RELATED"/>
    <property type="match status" value="1"/>
</dbReference>
<dbReference type="PANTHER" id="PTHR14198:SF15">
    <property type="entry name" value="TRANSMEMBRANE 4 L6 FAMILY MEMBER 4"/>
    <property type="match status" value="1"/>
</dbReference>
<dbReference type="Pfam" id="PF05805">
    <property type="entry name" value="L6_membrane"/>
    <property type="match status" value="1"/>
</dbReference>
<proteinExistence type="evidence at protein level"/>
<gene>
    <name type="primary">Tm4sf4</name>
</gene>
<organism>
    <name type="scientific">Mus musculus</name>
    <name type="common">Mouse</name>
    <dbReference type="NCBI Taxonomy" id="10090"/>
    <lineage>
        <taxon>Eukaryota</taxon>
        <taxon>Metazoa</taxon>
        <taxon>Chordata</taxon>
        <taxon>Craniata</taxon>
        <taxon>Vertebrata</taxon>
        <taxon>Euteleostomi</taxon>
        <taxon>Mammalia</taxon>
        <taxon>Eutheria</taxon>
        <taxon>Euarchontoglires</taxon>
        <taxon>Glires</taxon>
        <taxon>Rodentia</taxon>
        <taxon>Myomorpha</taxon>
        <taxon>Muroidea</taxon>
        <taxon>Muridae</taxon>
        <taxon>Murinae</taxon>
        <taxon>Mus</taxon>
        <taxon>Mus</taxon>
    </lineage>
</organism>
<evidence type="ECO:0000250" key="1"/>
<evidence type="ECO:0000255" key="2"/>
<evidence type="ECO:0000305" key="3"/>
<protein>
    <recommendedName>
        <fullName>Transmembrane 4 L6 family member 4</fullName>
    </recommendedName>
</protein>
<accession>Q91XD3</accession>
<sequence length="202" mass="21296">MCTGGCARCLGGTLIPLAVFGLLANILLFFPGGKVVNDKSHLSDEVWYFGGILGSGVLMIFPALVFLGLQNNDCCGCCGNEGCGKRFAMFTSTLFAVIGFLGAGYSFIVSAVSINKGPKCFMANGTWGYPFHDGDYLKDQALWSECEEPRDVVPWNLTLFSILLVIGGIQMVLCAIQVINGLLGTLCGDCQCCGCCGGDGPV</sequence>
<reference key="1">
    <citation type="journal article" date="2004" name="Genome Res.">
        <title>The status, quality, and expansion of the NIH full-length cDNA project: the Mammalian Gene Collection (MGC).</title>
        <authorList>
            <consortium name="The MGC Project Team"/>
        </authorList>
    </citation>
    <scope>NUCLEOTIDE SEQUENCE [LARGE SCALE MRNA]</scope>
    <source>
        <strain>FVB/N</strain>
        <tissue>Liver</tissue>
    </source>
</reference>
<reference key="2">
    <citation type="journal article" date="2010" name="Cell">
        <title>A tissue-specific atlas of mouse protein phosphorylation and expression.</title>
        <authorList>
            <person name="Huttlin E.L."/>
            <person name="Jedrychowski M.P."/>
            <person name="Elias J.E."/>
            <person name="Goswami T."/>
            <person name="Rad R."/>
            <person name="Beausoleil S.A."/>
            <person name="Villen J."/>
            <person name="Haas W."/>
            <person name="Sowa M.E."/>
            <person name="Gygi S.P."/>
        </authorList>
    </citation>
    <scope>IDENTIFICATION BY MASS SPECTROMETRY [LARGE SCALE ANALYSIS]</scope>
    <source>
        <tissue>Liver</tissue>
    </source>
</reference>